<sequence>MSGKLRLYKEKLEGYNRFYSIVKTIKMVTLAKYRAAQGRIRTRDFSLRYTELAFSKPQASRDAVAAAKNALVYIPITTNRGSCGALNSNIVRCIDSVVSSKMVLMPVGKRGIDSFSKLYPDEFRYGIINDMKESMHFGYATFVIENAYEVSKDADRYQVIFNRFVSAGVQRNAVYNIPSYEKWKEDLADAASSDNQKNRYLFANALQNEEEQLIRDFFDFHAALAVLNAVGENELSEQAARLVAVEGQLTNISSLQQRTSSLYNKTRQFGITAALIEILSAMSSLEGNAMKGVRRNKFWEGAVTK</sequence>
<accession>A0A161CFW5</accession>
<accession>A0A2U3T1L4</accession>
<protein>
    <recommendedName>
        <fullName>ATP synthase subunit gamma, mitochondrial</fullName>
    </recommendedName>
    <alternativeName>
        <fullName evidence="5">ATP synthase F1 subunit gamma</fullName>
    </alternativeName>
    <alternativeName>
        <fullName evidence="6">F(1)F(o)-ATPase gamma subunit</fullName>
    </alternativeName>
</protein>
<name>ATPG_TRYBB</name>
<dbReference type="EMBL" id="KX444506">
    <property type="protein sequence ID" value="AOF47129.1"/>
    <property type="molecule type" value="Genomic_DNA"/>
</dbReference>
<dbReference type="EMBL" id="KT934838">
    <property type="protein sequence ID" value="ALK02525.1"/>
    <property type="molecule type" value="Genomic_DNA"/>
</dbReference>
<dbReference type="EMBL" id="LS423645">
    <property type="protein sequence ID" value="SPS16791.1"/>
    <property type="molecule type" value="Genomic_DNA"/>
</dbReference>
<dbReference type="PDB" id="6F5D">
    <property type="method" value="X-ray"/>
    <property type="resolution" value="3.20 A"/>
    <property type="chains" value="G=2-305"/>
</dbReference>
<dbReference type="PDB" id="8AP9">
    <property type="method" value="EM"/>
    <property type="resolution" value="3.70 A"/>
    <property type="chains" value="G=1-305"/>
</dbReference>
<dbReference type="PDBsum" id="6F5D"/>
<dbReference type="PDBsum" id="8AP9"/>
<dbReference type="SMR" id="A0A161CFW5"/>
<dbReference type="GO" id="GO:0005743">
    <property type="term" value="C:mitochondrial inner membrane"/>
    <property type="evidence" value="ECO:0007669"/>
    <property type="project" value="UniProtKB-SubCell"/>
</dbReference>
<dbReference type="GO" id="GO:0045259">
    <property type="term" value="C:proton-transporting ATP synthase complex"/>
    <property type="evidence" value="ECO:0007669"/>
    <property type="project" value="UniProtKB-KW"/>
</dbReference>
<dbReference type="GO" id="GO:0016787">
    <property type="term" value="F:hydrolase activity"/>
    <property type="evidence" value="ECO:0007669"/>
    <property type="project" value="UniProtKB-KW"/>
</dbReference>
<dbReference type="GO" id="GO:0046933">
    <property type="term" value="F:proton-transporting ATP synthase activity, rotational mechanism"/>
    <property type="evidence" value="ECO:0007669"/>
    <property type="project" value="InterPro"/>
</dbReference>
<dbReference type="CDD" id="cd12151">
    <property type="entry name" value="F1-ATPase_gamma"/>
    <property type="match status" value="1"/>
</dbReference>
<dbReference type="FunFam" id="3.40.1380.10:FF:000009">
    <property type="entry name" value="ATP synthase F1 subunit gamma protein"/>
    <property type="match status" value="1"/>
</dbReference>
<dbReference type="Gene3D" id="3.40.1380.10">
    <property type="match status" value="1"/>
</dbReference>
<dbReference type="Gene3D" id="1.10.287.80">
    <property type="entry name" value="ATP synthase, gamma subunit, helix hairpin domain"/>
    <property type="match status" value="1"/>
</dbReference>
<dbReference type="InterPro" id="IPR035968">
    <property type="entry name" value="ATP_synth_F1_ATPase_gsu"/>
</dbReference>
<dbReference type="InterPro" id="IPR000131">
    <property type="entry name" value="ATP_synth_F1_gsu"/>
</dbReference>
<dbReference type="PANTHER" id="PTHR11693">
    <property type="entry name" value="ATP SYNTHASE GAMMA CHAIN"/>
    <property type="match status" value="1"/>
</dbReference>
<dbReference type="PANTHER" id="PTHR11693:SF22">
    <property type="entry name" value="ATP SYNTHASE SUBUNIT GAMMA, MITOCHONDRIAL"/>
    <property type="match status" value="1"/>
</dbReference>
<dbReference type="Pfam" id="PF00231">
    <property type="entry name" value="ATP-synt"/>
    <property type="match status" value="1"/>
</dbReference>
<dbReference type="PRINTS" id="PR00126">
    <property type="entry name" value="ATPASEGAMMA"/>
</dbReference>
<dbReference type="SUPFAM" id="SSF52943">
    <property type="entry name" value="ATP synthase (F1-ATPase), gamma subunit"/>
    <property type="match status" value="1"/>
</dbReference>
<feature type="initiator methionine" description="Removed" evidence="3">
    <location>
        <position position="1"/>
    </location>
</feature>
<feature type="chain" id="PRO_0000444143" description="ATP synthase subunit gamma, mitochondrial">
    <location>
        <begin position="2"/>
        <end position="305"/>
    </location>
</feature>
<feature type="mutagenesis site" description="Confers resistance to killing by ethidium bromide and isometamidium. Decreases mitochondrial membrane potential, and increases time required to reach lethal levels of parasitemia in vivo. Loss of the kinetoplast, a specialized mitochondrial structure that harbors the mitochondrial genome." evidence="2">
    <location>
        <begin position="284"/>
        <end position="305"/>
    </location>
</feature>
<comment type="function">
    <text evidence="1 3 4 7">Mitochondrial membrane ATP synthase (F(1)F(o) ATP synthase) produces ATP from ADP in the presence of a proton gradient across the membrane which is generated by electron transport complexes of the respiratory chain (PubMed:19436713, PubMed:29247468). F-type ATPases consist of two structural domains, F(1) - containing the extramembraneous catalytic core, and F(o) - containing the membrane proton channel, linked together by a central stalk and a peripheral stalk (PubMed:19436713, PubMed:29247468, PubMed:29440423). During catalysis, ATP synthesis in the catalytic domain of F(1) is coupled via a rotary mechanism of the central stalk subunits to proton translocation. Subunits alpha and beta form the catalytic core in F(1) (PubMed:19436713, PubMed:29440423). Rotation of the central stalk against the surrounding alpha(3)beta(3) subunits leads to hydrolysis of ATP in three separate catalytic sites on the beta subunits (Probable). Contrary to the procyclic, insect form that requires F(1)F(o) ATP synthase for ATP synthesis, the bloodstream form relies on ATP hydrolysis by F(1)F(o) ATP synthase to maintain its mitochondrial membrane potential (PubMed:29247468).</text>
</comment>
<comment type="subunit">
    <text evidence="1 3 4">F-type ATPases have 2 components, F(1) - the catalytic core - and F(o) - the membrane proton channel. F(1) has five subunits: alpha(3), beta(3), gamma(1), delta(1), epsilon(1), plus the additional subunit P18 (Tb427.05.1710) that is not present in F(1)F(o) ATP synthase from metazoa (PubMed:19436713, PubMed:29247468, PubMed:29440423). Subunit P18 (Tb927.5.1710) interacts with the alpha subunit with a 1:1 stoichiometry; the interaction is direct (PubMed:29440423). Subunit gamma is part of the central stalk (PubMed:29440423). F(o) has three main subunits: a, b and c (PubMed:19436713). The trypanosomal ATPase complex contains additional subunits that are not present in the F(1)F(o) ATP synthase from metazoa (PubMed:19436713, PubMed:29247468, PubMed:29440423).</text>
</comment>
<comment type="subcellular location">
    <subcellularLocation>
        <location>Mitochondrion</location>
    </subcellularLocation>
    <subcellularLocation>
        <location evidence="1 3 4">Mitochondrion inner membrane</location>
        <topology evidence="1 3 4">Peripheral membrane protein</topology>
        <orientation evidence="8 9 10">Matrix side</orientation>
    </subcellularLocation>
</comment>
<comment type="similarity">
    <text evidence="7">Belongs to the ATPase gamma chain family.</text>
</comment>
<gene>
    <name evidence="12" type="primary">ATPF1G</name>
    <name evidence="5" type="ORF">Tb427.10.180</name>
</gene>
<organism evidence="11">
    <name type="scientific">Trypanosoma brucei brucei</name>
    <dbReference type="NCBI Taxonomy" id="5702"/>
    <lineage>
        <taxon>Eukaryota</taxon>
        <taxon>Discoba</taxon>
        <taxon>Euglenozoa</taxon>
        <taxon>Kinetoplastea</taxon>
        <taxon>Metakinetoplastina</taxon>
        <taxon>Trypanosomatida</taxon>
        <taxon>Trypanosomatidae</taxon>
        <taxon>Trypanosoma</taxon>
    </lineage>
</organism>
<keyword id="KW-0002">3D-structure</keyword>
<keyword id="KW-0066">ATP synthesis</keyword>
<keyword id="KW-0139">CF(1)</keyword>
<keyword id="KW-0903">Direct protein sequencing</keyword>
<keyword id="KW-0375">Hydrogen ion transport</keyword>
<keyword id="KW-0378">Hydrolase</keyword>
<keyword id="KW-0406">Ion transport</keyword>
<keyword id="KW-0472">Membrane</keyword>
<keyword id="KW-0496">Mitochondrion</keyword>
<keyword id="KW-0999">Mitochondrion inner membrane</keyword>
<keyword id="KW-0813">Transport</keyword>
<evidence type="ECO:0000269" key="1">
    <source>
    </source>
</evidence>
<evidence type="ECO:0000269" key="2">
    <source>
    </source>
</evidence>
<evidence type="ECO:0000269" key="3">
    <source>
    </source>
</evidence>
<evidence type="ECO:0000269" key="4">
    <source>
    </source>
</evidence>
<evidence type="ECO:0000303" key="5">
    <source>
    </source>
</evidence>
<evidence type="ECO:0000303" key="6">
    <source>
    </source>
</evidence>
<evidence type="ECO:0000305" key="7"/>
<evidence type="ECO:0000305" key="8">
    <source>
    </source>
</evidence>
<evidence type="ECO:0000305" key="9">
    <source>
    </source>
</evidence>
<evidence type="ECO:0000305" key="10">
    <source>
    </source>
</evidence>
<evidence type="ECO:0000312" key="11">
    <source>
        <dbReference type="EMBL" id="ALK02525.1"/>
    </source>
</evidence>
<evidence type="ECO:0000312" key="12">
    <source>
        <dbReference type="EMBL" id="AOF47129.1"/>
    </source>
</evidence>
<proteinExistence type="evidence at protein level"/>
<reference evidence="12" key="1">
    <citation type="journal article" date="2016" name="PLoS Negl. Trop. Dis.">
        <title>Reduced mitochondrial membrane potential is a late adaptation of Trypanosoma brucei brucei to isometamidium preceded by mutations in the gamma subunit of the F1Fo-ATPase.</title>
        <authorList>
            <person name="Eze A.A."/>
            <person name="Gould M.K."/>
            <person name="Munday J.C."/>
            <person name="Tagoe D.N."/>
            <person name="Stelmanis V."/>
            <person name="Schnaufer A."/>
            <person name="De Koning H.P."/>
        </authorList>
    </citation>
    <scope>NUCLEOTIDE SEQUENCE [GENOMIC DNA]</scope>
    <scope>FUNCTION</scope>
    <scope>MUTAGENESIS OF 284-SER--LYS-305</scope>
    <source>
        <strain evidence="12">427</strain>
    </source>
</reference>
<reference key="2">
    <citation type="journal article" date="2018" name="Proc. Natl. Acad. Sci. U.S.A.">
        <title>ATP synthase from Trypanosoma brucei has an elaborated canonical F1-domain and conventional catalytic sites.</title>
        <authorList>
            <person name="Montgomery M.G."/>
            <person name="Gahura O."/>
            <person name="Leslie A.G.W."/>
            <person name="Zikova A."/>
            <person name="Walker J.E."/>
        </authorList>
    </citation>
    <scope>NUCLEOTIDE SEQUENCE [GENOMIC DNA]</scope>
    <scope>X-RAY CRYSTALLOGRAPHY (3.2 ANGSTROMS)</scope>
    <scope>FUNCTION</scope>
    <scope>SUBCELLULAR LOCATION</scope>
    <scope>SUBUNIT</scope>
    <source>
        <strain>427</strain>
    </source>
</reference>
<reference evidence="11" key="3">
    <citation type="submission" date="2015-10" db="EMBL/GenBank/DDBJ databases">
        <authorList>
            <person name="Birhanu H.A."/>
            <person name="Tadesse G."/>
            <person name="Goddeeris B.M."/>
            <person name="Van Reet N."/>
            <person name="Buscher P."/>
        </authorList>
    </citation>
    <scope>NUCLEOTIDE SEQUENCE [GENOMIC DNA]</scope>
    <source>
        <strain>427</strain>
    </source>
</reference>
<reference key="4">
    <citation type="journal article" date="2009" name="PLoS Pathog.">
        <title>The F(0)F(1)-ATP synthase complex contains novel subunits and is essential for procyclic Trypanosoma brucei.</title>
        <authorList>
            <person name="Zikova A."/>
            <person name="Schnaufer A."/>
            <person name="Dalley R.A."/>
            <person name="Panigrahi A.K."/>
            <person name="Stuart K.D."/>
        </authorList>
    </citation>
    <scope>FUNCTION</scope>
    <scope>SUBCELLULAR LOCATION</scope>
    <scope>SUBUNIT</scope>
    <scope>IDENTIFICATION BY MASS SPECTROMETRY</scope>
    <scope>NOMENCLATURE</scope>
    <source>
        <strain>427</strain>
    </source>
</reference>
<reference key="5">
    <citation type="journal article" date="2018" name="FEBS J.">
        <title>The F1-ATPase from Trypanosoma brucei is elaborated by three copies of an additional p18-subunit.</title>
        <authorList>
            <person name="Gahura O."/>
            <person name="Subrtova K."/>
            <person name="Vachova H."/>
            <person name="Panicucci B."/>
            <person name="Fearnley I.M."/>
            <person name="Harbour M.E."/>
            <person name="Walker J.E."/>
            <person name="Zikova A."/>
        </authorList>
    </citation>
    <scope>FUNCTION</scope>
    <scope>PROTEIN SEQUENCE OF 2-6</scope>
    <scope>SUBCELLULAR LOCATION</scope>
    <scope>SUBUNIT</scope>
    <scope>IDENTIFICATION BY MASS SPECTROMETRY</scope>
    <source>
        <strain>427</strain>
    </source>
</reference>